<reference key="1">
    <citation type="journal article" date="1995" name="Plant Mol. Biol.">
        <title>Molecular characterization of plastid pyruvate kinase from castor and tobacco.</title>
        <authorList>
            <person name="Blakeley S.D."/>
            <person name="Gottlob-Mchugh S."/>
            <person name="Wan J."/>
            <person name="Crews L."/>
            <person name="Miki B."/>
            <person name="Ko K."/>
            <person name="Dennis D.T."/>
        </authorList>
    </citation>
    <scope>NUCLEOTIDE SEQUENCE</scope>
    <source>
        <strain>cv. Baker 296</strain>
        <tissue>Seed</tissue>
    </source>
</reference>
<protein>
    <recommendedName>
        <fullName>Pyruvate kinase isozyme G, chloroplastic</fullName>
        <ecNumber>2.7.1.40</ecNumber>
    </recommendedName>
</protein>
<sequence length="418" mass="46007">NAQSHDNVVSIMLDTKGPEVRSGDVPQPMLKEGQEFNPTIRRGVSTQDTVSVNYDDFVNDVVVGDILLVDGGMMSLAVKSKTSDLVKCVVVDGGELKSRRHLNVRGKSARLPSITDKDWGDIKFGVDNQVDFYAVSFVKDAKVVHELKEYLKRCNADIHVIVKIESADSIPNLHSIISASDGAMVARGDLGAELPIEEVPLLQEDIIRRCHSMQKPVIVATNMLESMINHPTPTRAEVSDIAIAVREGADAVMLSGETAHGKYPLKAVRVMHTVALRTESSSPVNTTPPAQGAYKGHMGEMFAFHATIMANTLNTPIIVFTRTGSMAVLLSHYQPASTIFAFTNEERIKQRLSLYRGVMPIYMEFSSDAEETFSRALQLLLNKGLLVEGEHVTLVQSGAQPIWRQESTHHIQVRKVQN</sequence>
<evidence type="ECO:0000250" key="1"/>
<evidence type="ECO:0000250" key="2">
    <source>
        <dbReference type="UniProtKB" id="P14618"/>
    </source>
</evidence>
<evidence type="ECO:0000305" key="3"/>
<name>KPYG_RICCO</name>
<keyword id="KW-0067">ATP-binding</keyword>
<keyword id="KW-0150">Chloroplast</keyword>
<keyword id="KW-0324">Glycolysis</keyword>
<keyword id="KW-0418">Kinase</keyword>
<keyword id="KW-0460">Magnesium</keyword>
<keyword id="KW-0479">Metal-binding</keyword>
<keyword id="KW-0547">Nucleotide-binding</keyword>
<keyword id="KW-0934">Plastid</keyword>
<keyword id="KW-0670">Pyruvate</keyword>
<keyword id="KW-0808">Transferase</keyword>
<feature type="chain" id="PRO_0000112126" description="Pyruvate kinase isozyme G, chloroplastic">
    <location>
        <begin position="1" status="less than"/>
        <end position="418"/>
    </location>
</feature>
<feature type="binding site" evidence="1">
    <location>
        <position position="14"/>
    </location>
    <ligand>
        <name>K(+)</name>
        <dbReference type="ChEBI" id="CHEBI:29103"/>
    </ligand>
</feature>
<feature type="binding site" evidence="1">
    <location>
        <position position="15"/>
    </location>
    <ligand>
        <name>K(+)</name>
        <dbReference type="ChEBI" id="CHEBI:29103"/>
    </ligand>
</feature>
<feature type="binding site" evidence="2">
    <location>
        <position position="21"/>
    </location>
    <ligand>
        <name>ATP</name>
        <dbReference type="ChEBI" id="CHEBI:30616"/>
    </ligand>
</feature>
<feature type="binding site" evidence="1">
    <location>
        <position position="165"/>
    </location>
    <ligand>
        <name>Mg(2+)</name>
        <dbReference type="ChEBI" id="CHEBI:18420"/>
    </ligand>
</feature>
<feature type="binding site" evidence="1">
    <location>
        <position position="188"/>
    </location>
    <ligand>
        <name>substrate</name>
    </ligand>
</feature>
<feature type="binding site" evidence="1">
    <location>
        <position position="189"/>
    </location>
    <ligand>
        <name>Mg(2+)</name>
        <dbReference type="ChEBI" id="CHEBI:18420"/>
    </ligand>
</feature>
<feature type="binding site" evidence="1">
    <location>
        <position position="189"/>
    </location>
    <ligand>
        <name>substrate</name>
    </ligand>
</feature>
<feature type="binding site" evidence="1">
    <location>
        <position position="221"/>
    </location>
    <ligand>
        <name>substrate</name>
    </ligand>
</feature>
<feature type="site" description="Transition state stabilizer" evidence="1">
    <location>
        <position position="163"/>
    </location>
</feature>
<feature type="non-terminal residue">
    <location>
        <position position="1"/>
    </location>
</feature>
<comment type="catalytic activity">
    <reaction>
        <text>pyruvate + ATP = phosphoenolpyruvate + ADP + H(+)</text>
        <dbReference type="Rhea" id="RHEA:18157"/>
        <dbReference type="ChEBI" id="CHEBI:15361"/>
        <dbReference type="ChEBI" id="CHEBI:15378"/>
        <dbReference type="ChEBI" id="CHEBI:30616"/>
        <dbReference type="ChEBI" id="CHEBI:58702"/>
        <dbReference type="ChEBI" id="CHEBI:456216"/>
        <dbReference type="EC" id="2.7.1.40"/>
    </reaction>
</comment>
<comment type="cofactor">
    <cofactor evidence="1">
        <name>Mg(2+)</name>
        <dbReference type="ChEBI" id="CHEBI:18420"/>
    </cofactor>
</comment>
<comment type="cofactor">
    <cofactor evidence="1">
        <name>K(+)</name>
        <dbReference type="ChEBI" id="CHEBI:29103"/>
    </cofactor>
</comment>
<comment type="pathway">
    <text>Carbohydrate degradation; glycolysis; pyruvate from D-glyceraldehyde 3-phosphate: step 5/5.</text>
</comment>
<comment type="subcellular location">
    <subcellularLocation>
        <location>Plastid</location>
        <location>Chloroplast</location>
    </subcellularLocation>
</comment>
<comment type="tissue specificity">
    <text>Expressed in developing and germinating endosperm and in roots.</text>
</comment>
<comment type="similarity">
    <text evidence="3">Belongs to the pyruvate kinase family.</text>
</comment>
<accession>P55964</accession>
<proteinExistence type="evidence at transcript level"/>
<dbReference type="EC" id="2.7.1.40"/>
<dbReference type="SMR" id="P55964"/>
<dbReference type="eggNOG" id="KOG2323">
    <property type="taxonomic scope" value="Eukaryota"/>
</dbReference>
<dbReference type="UniPathway" id="UPA00109">
    <property type="reaction ID" value="UER00188"/>
</dbReference>
<dbReference type="GO" id="GO:0009507">
    <property type="term" value="C:chloroplast"/>
    <property type="evidence" value="ECO:0007669"/>
    <property type="project" value="UniProtKB-SubCell"/>
</dbReference>
<dbReference type="GO" id="GO:0005524">
    <property type="term" value="F:ATP binding"/>
    <property type="evidence" value="ECO:0007669"/>
    <property type="project" value="UniProtKB-KW"/>
</dbReference>
<dbReference type="GO" id="GO:0016301">
    <property type="term" value="F:kinase activity"/>
    <property type="evidence" value="ECO:0007669"/>
    <property type="project" value="UniProtKB-KW"/>
</dbReference>
<dbReference type="GO" id="GO:0000287">
    <property type="term" value="F:magnesium ion binding"/>
    <property type="evidence" value="ECO:0007669"/>
    <property type="project" value="InterPro"/>
</dbReference>
<dbReference type="GO" id="GO:0030955">
    <property type="term" value="F:potassium ion binding"/>
    <property type="evidence" value="ECO:0007669"/>
    <property type="project" value="InterPro"/>
</dbReference>
<dbReference type="GO" id="GO:0004743">
    <property type="term" value="F:pyruvate kinase activity"/>
    <property type="evidence" value="ECO:0007669"/>
    <property type="project" value="UniProtKB-EC"/>
</dbReference>
<dbReference type="FunFam" id="3.20.20.60:FF:000025">
    <property type="entry name" value="Pyruvate kinase"/>
    <property type="match status" value="1"/>
</dbReference>
<dbReference type="Gene3D" id="3.20.20.60">
    <property type="entry name" value="Phosphoenolpyruvate-binding domains"/>
    <property type="match status" value="1"/>
</dbReference>
<dbReference type="Gene3D" id="2.40.33.10">
    <property type="entry name" value="PK beta-barrel domain-like"/>
    <property type="match status" value="1"/>
</dbReference>
<dbReference type="Gene3D" id="3.40.1380.20">
    <property type="entry name" value="Pyruvate kinase, C-terminal domain"/>
    <property type="match status" value="1"/>
</dbReference>
<dbReference type="InterPro" id="IPR001697">
    <property type="entry name" value="Pyr_Knase"/>
</dbReference>
<dbReference type="InterPro" id="IPR015813">
    <property type="entry name" value="Pyrv/PenolPyrv_kinase-like_dom"/>
</dbReference>
<dbReference type="InterPro" id="IPR040442">
    <property type="entry name" value="Pyrv_kinase-like_dom_sf"/>
</dbReference>
<dbReference type="InterPro" id="IPR011037">
    <property type="entry name" value="Pyrv_Knase-like_insert_dom_sf"/>
</dbReference>
<dbReference type="InterPro" id="IPR018209">
    <property type="entry name" value="Pyrv_Knase_AS"/>
</dbReference>
<dbReference type="InterPro" id="IPR015793">
    <property type="entry name" value="Pyrv_Knase_brl"/>
</dbReference>
<dbReference type="InterPro" id="IPR015795">
    <property type="entry name" value="Pyrv_Knase_C"/>
</dbReference>
<dbReference type="InterPro" id="IPR036918">
    <property type="entry name" value="Pyrv_Knase_C_sf"/>
</dbReference>
<dbReference type="InterPro" id="IPR015806">
    <property type="entry name" value="Pyrv_Knase_insert_dom_sf"/>
</dbReference>
<dbReference type="NCBIfam" id="TIGR01064">
    <property type="entry name" value="pyruv_kin"/>
    <property type="match status" value="1"/>
</dbReference>
<dbReference type="PANTHER" id="PTHR11817">
    <property type="entry name" value="PYRUVATE KINASE"/>
    <property type="match status" value="1"/>
</dbReference>
<dbReference type="Pfam" id="PF00224">
    <property type="entry name" value="PK"/>
    <property type="match status" value="1"/>
</dbReference>
<dbReference type="Pfam" id="PF02887">
    <property type="entry name" value="PK_C"/>
    <property type="match status" value="1"/>
</dbReference>
<dbReference type="PRINTS" id="PR01050">
    <property type="entry name" value="PYRUVTKNASE"/>
</dbReference>
<dbReference type="SUPFAM" id="SSF51621">
    <property type="entry name" value="Phosphoenolpyruvate/pyruvate domain"/>
    <property type="match status" value="1"/>
</dbReference>
<dbReference type="SUPFAM" id="SSF50800">
    <property type="entry name" value="PK beta-barrel domain-like"/>
    <property type="match status" value="1"/>
</dbReference>
<dbReference type="SUPFAM" id="SSF52935">
    <property type="entry name" value="PK C-terminal domain-like"/>
    <property type="match status" value="1"/>
</dbReference>
<dbReference type="PROSITE" id="PS00110">
    <property type="entry name" value="PYRUVATE_KINASE"/>
    <property type="match status" value="1"/>
</dbReference>
<organism>
    <name type="scientific">Ricinus communis</name>
    <name type="common">Castor bean</name>
    <dbReference type="NCBI Taxonomy" id="3988"/>
    <lineage>
        <taxon>Eukaryota</taxon>
        <taxon>Viridiplantae</taxon>
        <taxon>Streptophyta</taxon>
        <taxon>Embryophyta</taxon>
        <taxon>Tracheophyta</taxon>
        <taxon>Spermatophyta</taxon>
        <taxon>Magnoliopsida</taxon>
        <taxon>eudicotyledons</taxon>
        <taxon>Gunneridae</taxon>
        <taxon>Pentapetalae</taxon>
        <taxon>rosids</taxon>
        <taxon>fabids</taxon>
        <taxon>Malpighiales</taxon>
        <taxon>Euphorbiaceae</taxon>
        <taxon>Acalyphoideae</taxon>
        <taxon>Acalypheae</taxon>
        <taxon>Ricinus</taxon>
    </lineage>
</organism>